<protein>
    <recommendedName>
        <fullName evidence="1">PqqA binding protein</fullName>
    </recommendedName>
    <alternativeName>
        <fullName evidence="1">Coenzyme PQQ synthesis protein D</fullName>
    </alternativeName>
    <alternativeName>
        <fullName evidence="1">Pyrroloquinoline quinone biosynthesis protein D</fullName>
    </alternativeName>
</protein>
<keyword id="KW-0884">PQQ biosynthesis</keyword>
<proteinExistence type="inferred from homology"/>
<evidence type="ECO:0000255" key="1">
    <source>
        <dbReference type="HAMAP-Rule" id="MF_00655"/>
    </source>
</evidence>
<comment type="function">
    <text evidence="1">Functions as a PqqA binding protein and presents PqqA to PqqE, in the pyrroloquinoline quinone (PQQ) biosynthetic pathway.</text>
</comment>
<comment type="pathway">
    <text evidence="1">Cofactor biosynthesis; pyrroloquinoline quinone biosynthesis.</text>
</comment>
<comment type="subunit">
    <text evidence="1">Monomer. Interacts with PqqE.</text>
</comment>
<comment type="similarity">
    <text evidence="1">Belongs to the PqqD family.</text>
</comment>
<sequence>MASRNITVSEASRPALPRHAKLRFDETRQRWVILAPERVLAPDDIAVEILQLCDGARSVSAIIDQLATKYTADRAEIGTDVVAMLQDLADKGFLTEARESAP</sequence>
<feature type="chain" id="PRO_1000061692" description="PqqA binding protein">
    <location>
        <begin position="1"/>
        <end position="102"/>
    </location>
</feature>
<reference key="1">
    <citation type="submission" date="2006-03" db="EMBL/GenBank/DDBJ databases">
        <title>Complete sequence of Rhodopseudomonas palustris BisB5.</title>
        <authorList>
            <consortium name="US DOE Joint Genome Institute"/>
            <person name="Copeland A."/>
            <person name="Lucas S."/>
            <person name="Lapidus A."/>
            <person name="Barry K."/>
            <person name="Detter J.C."/>
            <person name="Glavina del Rio T."/>
            <person name="Hammon N."/>
            <person name="Israni S."/>
            <person name="Dalin E."/>
            <person name="Tice H."/>
            <person name="Pitluck S."/>
            <person name="Chain P."/>
            <person name="Malfatti S."/>
            <person name="Shin M."/>
            <person name="Vergez L."/>
            <person name="Schmutz J."/>
            <person name="Larimer F."/>
            <person name="Land M."/>
            <person name="Hauser L."/>
            <person name="Pelletier D.A."/>
            <person name="Kyrpides N."/>
            <person name="Lykidis A."/>
            <person name="Oda Y."/>
            <person name="Harwood C.S."/>
            <person name="Richardson P."/>
        </authorList>
    </citation>
    <scope>NUCLEOTIDE SEQUENCE [LARGE SCALE GENOMIC DNA]</scope>
    <source>
        <strain>BisB5</strain>
    </source>
</reference>
<name>PQQD_RHOPS</name>
<organism>
    <name type="scientific">Rhodopseudomonas palustris (strain BisB5)</name>
    <dbReference type="NCBI Taxonomy" id="316057"/>
    <lineage>
        <taxon>Bacteria</taxon>
        <taxon>Pseudomonadati</taxon>
        <taxon>Pseudomonadota</taxon>
        <taxon>Alphaproteobacteria</taxon>
        <taxon>Hyphomicrobiales</taxon>
        <taxon>Nitrobacteraceae</taxon>
        <taxon>Rhodopseudomonas</taxon>
    </lineage>
</organism>
<accession>Q139H2</accession>
<dbReference type="EMBL" id="CP000283">
    <property type="protein sequence ID" value="ABE39267.1"/>
    <property type="molecule type" value="Genomic_DNA"/>
</dbReference>
<dbReference type="SMR" id="Q139H2"/>
<dbReference type="STRING" id="316057.RPD_2032"/>
<dbReference type="KEGG" id="rpd:RPD_2032"/>
<dbReference type="eggNOG" id="COG0535">
    <property type="taxonomic scope" value="Bacteria"/>
</dbReference>
<dbReference type="HOGENOM" id="CLU_163864_0_0_5"/>
<dbReference type="BioCyc" id="RPAL316057:RPD_RS10205-MONOMER"/>
<dbReference type="UniPathway" id="UPA00539"/>
<dbReference type="Proteomes" id="UP000001818">
    <property type="component" value="Chromosome"/>
</dbReference>
<dbReference type="GO" id="GO:0048038">
    <property type="term" value="F:quinone binding"/>
    <property type="evidence" value="ECO:0007669"/>
    <property type="project" value="InterPro"/>
</dbReference>
<dbReference type="GO" id="GO:0018189">
    <property type="term" value="P:pyrroloquinoline quinone biosynthetic process"/>
    <property type="evidence" value="ECO:0007669"/>
    <property type="project" value="UniProtKB-UniRule"/>
</dbReference>
<dbReference type="Gene3D" id="1.10.10.1150">
    <property type="entry name" value="Coenzyme PQQ synthesis protein D (PqqD)"/>
    <property type="match status" value="1"/>
</dbReference>
<dbReference type="HAMAP" id="MF_00655">
    <property type="entry name" value="PQQ_syn_PqqD"/>
    <property type="match status" value="1"/>
</dbReference>
<dbReference type="InterPro" id="IPR008792">
    <property type="entry name" value="PQQD"/>
</dbReference>
<dbReference type="InterPro" id="IPR022479">
    <property type="entry name" value="PqqD_bac"/>
</dbReference>
<dbReference type="InterPro" id="IPR041881">
    <property type="entry name" value="PqqD_sf"/>
</dbReference>
<dbReference type="NCBIfam" id="TIGR03859">
    <property type="entry name" value="PQQ_PqqD"/>
    <property type="match status" value="1"/>
</dbReference>
<dbReference type="Pfam" id="PF05402">
    <property type="entry name" value="PqqD"/>
    <property type="match status" value="1"/>
</dbReference>
<gene>
    <name evidence="1" type="primary">pqqD</name>
    <name type="ordered locus">RPD_2032</name>
</gene>